<organism>
    <name type="scientific">Streptomyces lividans</name>
    <dbReference type="NCBI Taxonomy" id="1916"/>
    <lineage>
        <taxon>Bacteria</taxon>
        <taxon>Bacillati</taxon>
        <taxon>Actinomycetota</taxon>
        <taxon>Actinomycetes</taxon>
        <taxon>Kitasatosporales</taxon>
        <taxon>Streptomycetaceae</taxon>
        <taxon>Streptomyces</taxon>
    </lineage>
</organism>
<reference key="1">
    <citation type="journal article" date="1997" name="Sanop Misaengmul Hakhoe Chi">
        <title>Molecular cloning and nucleotide sequence analysis of the secE gene from Streptomyces lividans TK24.</title>
        <authorList>
            <person name="Kim S.O."/>
            <person name="Suh J.W."/>
        </authorList>
    </citation>
    <scope>NUCLEOTIDE SEQUENCE [GENOMIC DNA]</scope>
    <source>
        <strain>TK24</strain>
    </source>
</reference>
<protein>
    <recommendedName>
        <fullName evidence="1">Protein translocase subunit SecE</fullName>
    </recommendedName>
</protein>
<feature type="chain" id="PRO_0000104186" description="Protein translocase subunit SecE">
    <location>
        <begin position="1"/>
        <end position="94"/>
    </location>
</feature>
<feature type="transmembrane region" description="Helical" evidence="1">
    <location>
        <begin position="65"/>
        <end position="85"/>
    </location>
</feature>
<feature type="region of interest" description="Disordered" evidence="2">
    <location>
        <begin position="1"/>
        <end position="32"/>
    </location>
</feature>
<feature type="compositionally biased region" description="Basic residues" evidence="2">
    <location>
        <begin position="22"/>
        <end position="32"/>
    </location>
</feature>
<accession>P0A4G9</accession>
<accession>P50055</accession>
<accession>Q9L0L4</accession>
<name>SECE_STRLI</name>
<comment type="function">
    <text evidence="1">Essential subunit of the Sec protein translocation channel SecYEG. Clamps together the 2 halves of SecY. May contact the channel plug during translocation.</text>
</comment>
<comment type="subunit">
    <text evidence="1">Component of the Sec protein translocase complex. Heterotrimer consisting of SecY, SecE and SecG subunits. The heterotrimers can form oligomers, although 1 heterotrimer is thought to be able to translocate proteins. Interacts with the ribosome. Interacts with SecDF, and other proteins may be involved. Interacts with SecA.</text>
</comment>
<comment type="subcellular location">
    <subcellularLocation>
        <location evidence="1">Cell membrane</location>
        <topology evidence="1">Single-pass membrane protein</topology>
    </subcellularLocation>
</comment>
<comment type="similarity">
    <text evidence="1">Belongs to the SecE/SEC61-gamma family.</text>
</comment>
<proteinExistence type="inferred from homology"/>
<gene>
    <name evidence="1" type="primary">secE</name>
</gene>
<keyword id="KW-1003">Cell membrane</keyword>
<keyword id="KW-0472">Membrane</keyword>
<keyword id="KW-0653">Protein transport</keyword>
<keyword id="KW-0811">Translocation</keyword>
<keyword id="KW-0812">Transmembrane</keyword>
<keyword id="KW-1133">Transmembrane helix</keyword>
<keyword id="KW-0813">Transport</keyword>
<evidence type="ECO:0000255" key="1">
    <source>
        <dbReference type="HAMAP-Rule" id="MF_00422"/>
    </source>
</evidence>
<evidence type="ECO:0000256" key="2">
    <source>
        <dbReference type="SAM" id="MobiDB-lite"/>
    </source>
</evidence>
<sequence length="94" mass="10446">MTDAVGSIDMPDAQDEAPDSKKSRKGGKRGKKGPLKRLALFYRQIVADVRKVVWPSRNQLTTYTTVVIIFVVIMIGLVTLIDYGFSHAAKYVFG</sequence>
<dbReference type="EMBL" id="AF071013">
    <property type="protein sequence ID" value="AAC33325.1"/>
    <property type="molecule type" value="Genomic_DNA"/>
</dbReference>
<dbReference type="SMR" id="P0A4G9"/>
<dbReference type="GO" id="GO:0005886">
    <property type="term" value="C:plasma membrane"/>
    <property type="evidence" value="ECO:0007669"/>
    <property type="project" value="UniProtKB-SubCell"/>
</dbReference>
<dbReference type="GO" id="GO:0008320">
    <property type="term" value="F:protein transmembrane transporter activity"/>
    <property type="evidence" value="ECO:0007669"/>
    <property type="project" value="UniProtKB-UniRule"/>
</dbReference>
<dbReference type="GO" id="GO:0065002">
    <property type="term" value="P:intracellular protein transmembrane transport"/>
    <property type="evidence" value="ECO:0007669"/>
    <property type="project" value="UniProtKB-UniRule"/>
</dbReference>
<dbReference type="GO" id="GO:0009306">
    <property type="term" value="P:protein secretion"/>
    <property type="evidence" value="ECO:0007669"/>
    <property type="project" value="UniProtKB-UniRule"/>
</dbReference>
<dbReference type="GO" id="GO:0006605">
    <property type="term" value="P:protein targeting"/>
    <property type="evidence" value="ECO:0007669"/>
    <property type="project" value="UniProtKB-UniRule"/>
</dbReference>
<dbReference type="GO" id="GO:0043952">
    <property type="term" value="P:protein transport by the Sec complex"/>
    <property type="evidence" value="ECO:0007669"/>
    <property type="project" value="UniProtKB-UniRule"/>
</dbReference>
<dbReference type="Gene3D" id="1.20.5.1030">
    <property type="entry name" value="Preprotein translocase secy subunit"/>
    <property type="match status" value="1"/>
</dbReference>
<dbReference type="HAMAP" id="MF_00422">
    <property type="entry name" value="SecE"/>
    <property type="match status" value="1"/>
</dbReference>
<dbReference type="InterPro" id="IPR005807">
    <property type="entry name" value="SecE_bac"/>
</dbReference>
<dbReference type="InterPro" id="IPR038379">
    <property type="entry name" value="SecE_sf"/>
</dbReference>
<dbReference type="InterPro" id="IPR001901">
    <property type="entry name" value="Translocase_SecE/Sec61-g"/>
</dbReference>
<dbReference type="NCBIfam" id="TIGR00964">
    <property type="entry name" value="secE_bact"/>
    <property type="match status" value="1"/>
</dbReference>
<dbReference type="PANTHER" id="PTHR33910">
    <property type="entry name" value="PROTEIN TRANSLOCASE SUBUNIT SECE"/>
    <property type="match status" value="1"/>
</dbReference>
<dbReference type="PANTHER" id="PTHR33910:SF1">
    <property type="entry name" value="PROTEIN TRANSLOCASE SUBUNIT SECE"/>
    <property type="match status" value="1"/>
</dbReference>
<dbReference type="Pfam" id="PF00584">
    <property type="entry name" value="SecE"/>
    <property type="match status" value="1"/>
</dbReference>
<dbReference type="PROSITE" id="PS01067">
    <property type="entry name" value="SECE_SEC61G"/>
    <property type="match status" value="1"/>
</dbReference>